<gene>
    <name evidence="1" type="primary">pdxK</name>
    <name type="ordered locus">ECDH10B_2583</name>
</gene>
<accession>B1XA89</accession>
<organism>
    <name type="scientific">Escherichia coli (strain K12 / DH10B)</name>
    <dbReference type="NCBI Taxonomy" id="316385"/>
    <lineage>
        <taxon>Bacteria</taxon>
        <taxon>Pseudomonadati</taxon>
        <taxon>Pseudomonadota</taxon>
        <taxon>Gammaproteobacteria</taxon>
        <taxon>Enterobacterales</taxon>
        <taxon>Enterobacteriaceae</taxon>
        <taxon>Escherichia</taxon>
    </lineage>
</organism>
<feature type="chain" id="PRO_1000186805" description="Pyridoxine/pyridoxal/pyridoxamine kinase">
    <location>
        <begin position="1"/>
        <end position="283"/>
    </location>
</feature>
<feature type="binding site" evidence="1">
    <location>
        <position position="23"/>
    </location>
    <ligand>
        <name>substrate</name>
    </ligand>
</feature>
<feature type="binding site" evidence="1">
    <location>
        <position position="59"/>
    </location>
    <ligand>
        <name>substrate</name>
    </ligand>
</feature>
<feature type="binding site" evidence="1">
    <location>
        <position position="125"/>
    </location>
    <ligand>
        <name>ATP</name>
        <dbReference type="ChEBI" id="CHEBI:30616"/>
    </ligand>
</feature>
<feature type="binding site" evidence="1">
    <location>
        <position position="136"/>
    </location>
    <ligand>
        <name>Mg(2+)</name>
        <dbReference type="ChEBI" id="CHEBI:18420"/>
    </ligand>
</feature>
<feature type="binding site" evidence="1">
    <location>
        <position position="157"/>
    </location>
    <ligand>
        <name>ATP</name>
        <dbReference type="ChEBI" id="CHEBI:30616"/>
    </ligand>
</feature>
<feature type="binding site" evidence="1">
    <location>
        <position position="162"/>
    </location>
    <ligand>
        <name>ATP</name>
        <dbReference type="ChEBI" id="CHEBI:30616"/>
    </ligand>
</feature>
<feature type="binding site" evidence="1">
    <location>
        <position position="162"/>
    </location>
    <ligand>
        <name>Mg(2+)</name>
        <dbReference type="ChEBI" id="CHEBI:18420"/>
    </ligand>
</feature>
<feature type="binding site" evidence="1">
    <location>
        <position position="195"/>
    </location>
    <ligand>
        <name>ATP</name>
        <dbReference type="ChEBI" id="CHEBI:30616"/>
    </ligand>
</feature>
<feature type="binding site" evidence="1">
    <location>
        <begin position="221"/>
        <end position="224"/>
    </location>
    <ligand>
        <name>ATP</name>
        <dbReference type="ChEBI" id="CHEBI:30616"/>
    </ligand>
</feature>
<feature type="binding site" evidence="1">
    <location>
        <position position="231"/>
    </location>
    <ligand>
        <name>ATP</name>
        <dbReference type="ChEBI" id="CHEBI:30616"/>
    </ligand>
</feature>
<feature type="binding site" evidence="1">
    <location>
        <position position="233"/>
    </location>
    <ligand>
        <name>substrate</name>
    </ligand>
</feature>
<evidence type="ECO:0000255" key="1">
    <source>
        <dbReference type="HAMAP-Rule" id="MF_01638"/>
    </source>
</evidence>
<name>PDXK_ECODH</name>
<dbReference type="EC" id="2.7.1.35" evidence="1"/>
<dbReference type="EMBL" id="CP000948">
    <property type="protein sequence ID" value="ACB03569.1"/>
    <property type="molecule type" value="Genomic_DNA"/>
</dbReference>
<dbReference type="RefSeq" id="WP_000096674.1">
    <property type="nucleotide sequence ID" value="NC_010473.1"/>
</dbReference>
<dbReference type="SMR" id="B1XA89"/>
<dbReference type="KEGG" id="ecd:ECDH10B_2583"/>
<dbReference type="HOGENOM" id="CLU_046496_3_1_6"/>
<dbReference type="UniPathway" id="UPA01068">
    <property type="reaction ID" value="UER00298"/>
</dbReference>
<dbReference type="UniPathway" id="UPA01068">
    <property type="reaction ID" value="UER00299"/>
</dbReference>
<dbReference type="UniPathway" id="UPA01068">
    <property type="reaction ID" value="UER00300"/>
</dbReference>
<dbReference type="GO" id="GO:0005829">
    <property type="term" value="C:cytosol"/>
    <property type="evidence" value="ECO:0007669"/>
    <property type="project" value="TreeGrafter"/>
</dbReference>
<dbReference type="GO" id="GO:0005524">
    <property type="term" value="F:ATP binding"/>
    <property type="evidence" value="ECO:0007669"/>
    <property type="project" value="UniProtKB-UniRule"/>
</dbReference>
<dbReference type="GO" id="GO:0008902">
    <property type="term" value="F:hydroxymethylpyrimidine kinase activity"/>
    <property type="evidence" value="ECO:0007669"/>
    <property type="project" value="TreeGrafter"/>
</dbReference>
<dbReference type="GO" id="GO:0000287">
    <property type="term" value="F:magnesium ion binding"/>
    <property type="evidence" value="ECO:0007669"/>
    <property type="project" value="UniProtKB-UniRule"/>
</dbReference>
<dbReference type="GO" id="GO:0008478">
    <property type="term" value="F:pyridoxal kinase activity"/>
    <property type="evidence" value="ECO:0007669"/>
    <property type="project" value="UniProtKB-UniRule"/>
</dbReference>
<dbReference type="GO" id="GO:0008270">
    <property type="term" value="F:zinc ion binding"/>
    <property type="evidence" value="ECO:0007669"/>
    <property type="project" value="UniProtKB-UniRule"/>
</dbReference>
<dbReference type="GO" id="GO:0009443">
    <property type="term" value="P:pyridoxal 5'-phosphate salvage"/>
    <property type="evidence" value="ECO:0007669"/>
    <property type="project" value="UniProtKB-UniRule"/>
</dbReference>
<dbReference type="CDD" id="cd01173">
    <property type="entry name" value="pyridoxal_pyridoxamine_kinase"/>
    <property type="match status" value="1"/>
</dbReference>
<dbReference type="FunFam" id="3.40.1190.20:FF:000009">
    <property type="entry name" value="Pyridoxine/pyridoxal/pyridoxamine kinase"/>
    <property type="match status" value="1"/>
</dbReference>
<dbReference type="Gene3D" id="3.40.1190.20">
    <property type="match status" value="1"/>
</dbReference>
<dbReference type="HAMAP" id="MF_01638">
    <property type="entry name" value="PdxK"/>
    <property type="match status" value="1"/>
</dbReference>
<dbReference type="InterPro" id="IPR023479">
    <property type="entry name" value="PdxK"/>
</dbReference>
<dbReference type="InterPro" id="IPR013749">
    <property type="entry name" value="PM/HMP-P_kinase-1"/>
</dbReference>
<dbReference type="InterPro" id="IPR004625">
    <property type="entry name" value="PyrdxlKinase"/>
</dbReference>
<dbReference type="InterPro" id="IPR029056">
    <property type="entry name" value="Ribokinase-like"/>
</dbReference>
<dbReference type="NCBIfam" id="NF006034">
    <property type="entry name" value="PRK08176.1"/>
    <property type="match status" value="1"/>
</dbReference>
<dbReference type="NCBIfam" id="TIGR00687">
    <property type="entry name" value="pyridox_kin"/>
    <property type="match status" value="1"/>
</dbReference>
<dbReference type="PANTHER" id="PTHR10534">
    <property type="entry name" value="PYRIDOXAL KINASE"/>
    <property type="match status" value="1"/>
</dbReference>
<dbReference type="PANTHER" id="PTHR10534:SF15">
    <property type="entry name" value="PYRIDOXINE_PYRIDOXAL_PYRIDOXAMINE KINASE"/>
    <property type="match status" value="1"/>
</dbReference>
<dbReference type="Pfam" id="PF08543">
    <property type="entry name" value="Phos_pyr_kin"/>
    <property type="match status" value="1"/>
</dbReference>
<dbReference type="SUPFAM" id="SSF53613">
    <property type="entry name" value="Ribokinase-like"/>
    <property type="match status" value="1"/>
</dbReference>
<protein>
    <recommendedName>
        <fullName evidence="1">Pyridoxine/pyridoxal/pyridoxamine kinase</fullName>
        <shortName evidence="1">PN/PL/PM kinase</shortName>
        <ecNumber evidence="1">2.7.1.35</ecNumber>
    </recommendedName>
    <alternativeName>
        <fullName evidence="1">B6-vitamer kinase</fullName>
    </alternativeName>
</protein>
<comment type="function">
    <text evidence="1">B6-vitamer kinase involved in the salvage pathway of pyridoxal 5'-phosphate (PLP). Catalyzes the phosphorylation of pyridoxine (PN), pyridoxal (PL), and pyridoxamine (PM), forming their respective 5'-phosphorylated esters, i.e. PNP, PLP and PMP.</text>
</comment>
<comment type="catalytic activity">
    <reaction evidence="1">
        <text>pyridoxal + ATP = pyridoxal 5'-phosphate + ADP + H(+)</text>
        <dbReference type="Rhea" id="RHEA:10224"/>
        <dbReference type="ChEBI" id="CHEBI:15378"/>
        <dbReference type="ChEBI" id="CHEBI:17310"/>
        <dbReference type="ChEBI" id="CHEBI:30616"/>
        <dbReference type="ChEBI" id="CHEBI:456216"/>
        <dbReference type="ChEBI" id="CHEBI:597326"/>
        <dbReference type="EC" id="2.7.1.35"/>
    </reaction>
</comment>
<comment type="catalytic activity">
    <reaction evidence="1">
        <text>pyridoxine + ATP = pyridoxine 5'-phosphate + ADP + H(+)</text>
        <dbReference type="Rhea" id="RHEA:25108"/>
        <dbReference type="ChEBI" id="CHEBI:15378"/>
        <dbReference type="ChEBI" id="CHEBI:16709"/>
        <dbReference type="ChEBI" id="CHEBI:30616"/>
        <dbReference type="ChEBI" id="CHEBI:58589"/>
        <dbReference type="ChEBI" id="CHEBI:456216"/>
        <dbReference type="EC" id="2.7.1.35"/>
    </reaction>
</comment>
<comment type="catalytic activity">
    <reaction evidence="1">
        <text>pyridoxamine + ATP = pyridoxamine 5'-phosphate + ADP + H(+)</text>
        <dbReference type="Rhea" id="RHEA:25104"/>
        <dbReference type="ChEBI" id="CHEBI:15378"/>
        <dbReference type="ChEBI" id="CHEBI:30616"/>
        <dbReference type="ChEBI" id="CHEBI:57761"/>
        <dbReference type="ChEBI" id="CHEBI:58451"/>
        <dbReference type="ChEBI" id="CHEBI:456216"/>
        <dbReference type="EC" id="2.7.1.35"/>
    </reaction>
</comment>
<comment type="cofactor">
    <cofactor evidence="1">
        <name>Mg(2+)</name>
        <dbReference type="ChEBI" id="CHEBI:18420"/>
    </cofactor>
</comment>
<comment type="pathway">
    <text evidence="1">Cofactor metabolism; pyridoxal 5'-phosphate salvage; pyridoxal 5'-phosphate from pyridoxal: step 1/1.</text>
</comment>
<comment type="pathway">
    <text evidence="1">Cofactor metabolism; pyridoxal 5'-phosphate salvage; pyridoxine 5'-phosphate from pyridoxine: step 1/1.</text>
</comment>
<comment type="pathway">
    <text evidence="1">Cofactor metabolism; pyridoxal 5'-phosphate salvage; pyridoxamine 5'-phosphate from pyridoxamine: step 1/1.</text>
</comment>
<comment type="subunit">
    <text evidence="1">Homodimer.</text>
</comment>
<comment type="similarity">
    <text evidence="1">Belongs to the pyridoxine kinase family. PdxK subfamily.</text>
</comment>
<proteinExistence type="inferred from homology"/>
<sequence>MSSLLLFNDKSRALQADIVAVQSQVVYGSVGNSIAVPAIKQNGLNVFAVPTVLLSNTPHYDTFYGGAIPDEWFSGYLRALQERDALRQLRAVTTGYMGTASQIKILAEWLTALRKDHPDLLIMVDPVIGDIDSGIYVKPDLPEAYRQYLLPLAQGITPNIFELEILTGKNCRDLDSAIAAAKSLLSDTLKWVVVTSASGNEENQEMQVVVVTADSVNVISHSRVKTDLKGTGDLFCAQLISGLLKGKALTDAVHRAGLRVLEVMRYTQQHESDELILPPLAEA</sequence>
<keyword id="KW-0067">ATP-binding</keyword>
<keyword id="KW-0418">Kinase</keyword>
<keyword id="KW-0460">Magnesium</keyword>
<keyword id="KW-0479">Metal-binding</keyword>
<keyword id="KW-0547">Nucleotide-binding</keyword>
<keyword id="KW-0808">Transferase</keyword>
<keyword id="KW-0862">Zinc</keyword>
<reference key="1">
    <citation type="journal article" date="2008" name="J. Bacteriol.">
        <title>The complete genome sequence of Escherichia coli DH10B: insights into the biology of a laboratory workhorse.</title>
        <authorList>
            <person name="Durfee T."/>
            <person name="Nelson R."/>
            <person name="Baldwin S."/>
            <person name="Plunkett G. III"/>
            <person name="Burland V."/>
            <person name="Mau B."/>
            <person name="Petrosino J.F."/>
            <person name="Qin X."/>
            <person name="Muzny D.M."/>
            <person name="Ayele M."/>
            <person name="Gibbs R.A."/>
            <person name="Csorgo B."/>
            <person name="Posfai G."/>
            <person name="Weinstock G.M."/>
            <person name="Blattner F.R."/>
        </authorList>
    </citation>
    <scope>NUCLEOTIDE SEQUENCE [LARGE SCALE GENOMIC DNA]</scope>
    <source>
        <strain>K12 / DH10B</strain>
    </source>
</reference>